<sequence>METWQELKVTVKREGEELVSNLLIELGAQGVAIEDSMDYMGNVDRFGEIFPEVEQQEEIVVTAYYPDTVDVTVVEADLQARLAELTDFMDLGEVKMGTTALAEEDWADNWKKYYEPARITHDLTIVPSWTDYEATAGEKIIKLDPGMAFGTGTHPTTKMSLFALEQVLRGGETVLDVGTGSGVLSIASSLLGAKEIFAYDLDDVAVRVAQENIELNPGMENIHVAAGDLLKGVEIEADVIVANILADILIHLTDDAYRLVKDEGYLIMSGIIKDKWDMVRESAESAGFFLETHMVQGEWNACVFKKTKDISGVIGG</sequence>
<protein>
    <recommendedName>
        <fullName evidence="1">Ribosomal protein L11 methyltransferase</fullName>
        <shortName evidence="1">L11 Mtase</shortName>
        <ecNumber evidence="1">2.1.1.-</ecNumber>
    </recommendedName>
</protein>
<feature type="chain" id="PRO_1000046104" description="Ribosomal protein L11 methyltransferase">
    <location>
        <begin position="1"/>
        <end position="316"/>
    </location>
</feature>
<feature type="binding site" evidence="1">
    <location>
        <position position="157"/>
    </location>
    <ligand>
        <name>S-adenosyl-L-methionine</name>
        <dbReference type="ChEBI" id="CHEBI:59789"/>
    </ligand>
</feature>
<feature type="binding site" evidence="1">
    <location>
        <position position="178"/>
    </location>
    <ligand>
        <name>S-adenosyl-L-methionine</name>
        <dbReference type="ChEBI" id="CHEBI:59789"/>
    </ligand>
</feature>
<feature type="binding site" evidence="1">
    <location>
        <position position="200"/>
    </location>
    <ligand>
        <name>S-adenosyl-L-methionine</name>
        <dbReference type="ChEBI" id="CHEBI:59789"/>
    </ligand>
</feature>
<feature type="binding site" evidence="1">
    <location>
        <position position="243"/>
    </location>
    <ligand>
        <name>S-adenosyl-L-methionine</name>
        <dbReference type="ChEBI" id="CHEBI:59789"/>
    </ligand>
</feature>
<evidence type="ECO:0000255" key="1">
    <source>
        <dbReference type="HAMAP-Rule" id="MF_00735"/>
    </source>
</evidence>
<comment type="function">
    <text evidence="1">Methylates ribosomal protein L11.</text>
</comment>
<comment type="catalytic activity">
    <reaction evidence="1">
        <text>L-lysyl-[protein] + 3 S-adenosyl-L-methionine = N(6),N(6),N(6)-trimethyl-L-lysyl-[protein] + 3 S-adenosyl-L-homocysteine + 3 H(+)</text>
        <dbReference type="Rhea" id="RHEA:54192"/>
        <dbReference type="Rhea" id="RHEA-COMP:9752"/>
        <dbReference type="Rhea" id="RHEA-COMP:13826"/>
        <dbReference type="ChEBI" id="CHEBI:15378"/>
        <dbReference type="ChEBI" id="CHEBI:29969"/>
        <dbReference type="ChEBI" id="CHEBI:57856"/>
        <dbReference type="ChEBI" id="CHEBI:59789"/>
        <dbReference type="ChEBI" id="CHEBI:61961"/>
    </reaction>
</comment>
<comment type="subcellular location">
    <subcellularLocation>
        <location evidence="1">Cytoplasm</location>
    </subcellularLocation>
</comment>
<comment type="similarity">
    <text evidence="1">Belongs to the methyltransferase superfamily. PrmA family.</text>
</comment>
<organism>
    <name type="scientific">Streptococcus pneumoniae serotype 2 (strain D39 / NCTC 7466)</name>
    <dbReference type="NCBI Taxonomy" id="373153"/>
    <lineage>
        <taxon>Bacteria</taxon>
        <taxon>Bacillati</taxon>
        <taxon>Bacillota</taxon>
        <taxon>Bacilli</taxon>
        <taxon>Lactobacillales</taxon>
        <taxon>Streptococcaceae</taxon>
        <taxon>Streptococcus</taxon>
    </lineage>
</organism>
<gene>
    <name evidence="1" type="primary">prmA</name>
    <name type="ordered locus">SPD_1573</name>
</gene>
<keyword id="KW-0963">Cytoplasm</keyword>
<keyword id="KW-0489">Methyltransferase</keyword>
<keyword id="KW-1185">Reference proteome</keyword>
<keyword id="KW-0949">S-adenosyl-L-methionine</keyword>
<keyword id="KW-0808">Transferase</keyword>
<reference key="1">
    <citation type="journal article" date="2007" name="J. Bacteriol.">
        <title>Genome sequence of Avery's virulent serotype 2 strain D39 of Streptococcus pneumoniae and comparison with that of unencapsulated laboratory strain R6.</title>
        <authorList>
            <person name="Lanie J.A."/>
            <person name="Ng W.-L."/>
            <person name="Kazmierczak K.M."/>
            <person name="Andrzejewski T.M."/>
            <person name="Davidsen T.M."/>
            <person name="Wayne K.J."/>
            <person name="Tettelin H."/>
            <person name="Glass J.I."/>
            <person name="Winkler M.E."/>
        </authorList>
    </citation>
    <scope>NUCLEOTIDE SEQUENCE [LARGE SCALE GENOMIC DNA]</scope>
    <source>
        <strain>D39 / NCTC 7466</strain>
    </source>
</reference>
<proteinExistence type="inferred from homology"/>
<name>PRMA_STRP2</name>
<dbReference type="EC" id="2.1.1.-" evidence="1"/>
<dbReference type="EMBL" id="CP000410">
    <property type="protein sequence ID" value="ABJ54943.1"/>
    <property type="molecule type" value="Genomic_DNA"/>
</dbReference>
<dbReference type="RefSeq" id="WP_000451131.1">
    <property type="nucleotide sequence ID" value="NZ_JAMLJR010000003.1"/>
</dbReference>
<dbReference type="SMR" id="Q04J12"/>
<dbReference type="PaxDb" id="373153-SPD_1573"/>
<dbReference type="KEGG" id="spd:SPD_1573"/>
<dbReference type="eggNOG" id="COG2264">
    <property type="taxonomic scope" value="Bacteria"/>
</dbReference>
<dbReference type="HOGENOM" id="CLU_049382_0_1_9"/>
<dbReference type="BioCyc" id="SPNE373153:G1G6V-1698-MONOMER"/>
<dbReference type="Proteomes" id="UP000001452">
    <property type="component" value="Chromosome"/>
</dbReference>
<dbReference type="GO" id="GO:0005737">
    <property type="term" value="C:cytoplasm"/>
    <property type="evidence" value="ECO:0007669"/>
    <property type="project" value="UniProtKB-SubCell"/>
</dbReference>
<dbReference type="GO" id="GO:0016279">
    <property type="term" value="F:protein-lysine N-methyltransferase activity"/>
    <property type="evidence" value="ECO:0007669"/>
    <property type="project" value="RHEA"/>
</dbReference>
<dbReference type="GO" id="GO:0032259">
    <property type="term" value="P:methylation"/>
    <property type="evidence" value="ECO:0007669"/>
    <property type="project" value="UniProtKB-KW"/>
</dbReference>
<dbReference type="CDD" id="cd02440">
    <property type="entry name" value="AdoMet_MTases"/>
    <property type="match status" value="1"/>
</dbReference>
<dbReference type="Gene3D" id="3.40.50.150">
    <property type="entry name" value="Vaccinia Virus protein VP39"/>
    <property type="match status" value="1"/>
</dbReference>
<dbReference type="HAMAP" id="MF_00735">
    <property type="entry name" value="Methyltr_PrmA"/>
    <property type="match status" value="1"/>
</dbReference>
<dbReference type="InterPro" id="IPR050078">
    <property type="entry name" value="Ribosomal_L11_MeTrfase_PrmA"/>
</dbReference>
<dbReference type="InterPro" id="IPR004498">
    <property type="entry name" value="Ribosomal_PrmA_MeTrfase"/>
</dbReference>
<dbReference type="InterPro" id="IPR029063">
    <property type="entry name" value="SAM-dependent_MTases_sf"/>
</dbReference>
<dbReference type="NCBIfam" id="TIGR00406">
    <property type="entry name" value="prmA"/>
    <property type="match status" value="1"/>
</dbReference>
<dbReference type="PANTHER" id="PTHR43648">
    <property type="entry name" value="ELECTRON TRANSFER FLAVOPROTEIN BETA SUBUNIT LYSINE METHYLTRANSFERASE"/>
    <property type="match status" value="1"/>
</dbReference>
<dbReference type="PANTHER" id="PTHR43648:SF1">
    <property type="entry name" value="ELECTRON TRANSFER FLAVOPROTEIN BETA SUBUNIT LYSINE METHYLTRANSFERASE"/>
    <property type="match status" value="1"/>
</dbReference>
<dbReference type="Pfam" id="PF06325">
    <property type="entry name" value="PrmA"/>
    <property type="match status" value="1"/>
</dbReference>
<dbReference type="PIRSF" id="PIRSF000401">
    <property type="entry name" value="RPL11_MTase"/>
    <property type="match status" value="1"/>
</dbReference>
<dbReference type="SUPFAM" id="SSF53335">
    <property type="entry name" value="S-adenosyl-L-methionine-dependent methyltransferases"/>
    <property type="match status" value="1"/>
</dbReference>
<accession>Q04J12</accession>